<comment type="alternative products">
    <event type="alternative splicing"/>
    <isoform>
        <id>Q8NEE8-1</id>
        <name>1</name>
        <sequence type="displayed"/>
    </isoform>
    <isoform>
        <id>Q8NEE8-2</id>
        <name>2</name>
        <sequence type="described" ref="VSP_056854 VSP_056855 VSP_056856"/>
    </isoform>
</comment>
<feature type="chain" id="PRO_0000106403" description="Tetratricopeptide repeat protein 16">
    <location>
        <begin position="1"/>
        <end position="873"/>
    </location>
</feature>
<feature type="repeat" description="TPR 1">
    <location>
        <begin position="61"/>
        <end position="94"/>
    </location>
</feature>
<feature type="repeat" description="TPR 2">
    <location>
        <begin position="96"/>
        <end position="128"/>
    </location>
</feature>
<feature type="repeat" description="TPR 3">
    <location>
        <begin position="136"/>
        <end position="169"/>
    </location>
</feature>
<feature type="repeat" description="TPR 4">
    <location>
        <begin position="251"/>
        <end position="284"/>
    </location>
</feature>
<feature type="repeat" description="TPR 5">
    <location>
        <begin position="285"/>
        <end position="318"/>
    </location>
</feature>
<feature type="repeat" description="TPR 6">
    <location>
        <begin position="331"/>
        <end position="364"/>
    </location>
</feature>
<feature type="repeat" description="TPR 7">
    <location>
        <begin position="365"/>
        <end position="398"/>
    </location>
</feature>
<feature type="repeat" description="TPR 8">
    <location>
        <begin position="406"/>
        <end position="439"/>
    </location>
</feature>
<feature type="region of interest" description="Disordered" evidence="1">
    <location>
        <begin position="1"/>
        <end position="20"/>
    </location>
</feature>
<feature type="region of interest" description="Disordered" evidence="1">
    <location>
        <begin position="553"/>
        <end position="626"/>
    </location>
</feature>
<feature type="region of interest" description="Disordered" evidence="1">
    <location>
        <begin position="639"/>
        <end position="873"/>
    </location>
</feature>
<feature type="compositionally biased region" description="Acidic residues" evidence="1">
    <location>
        <begin position="571"/>
        <end position="582"/>
    </location>
</feature>
<feature type="compositionally biased region" description="Basic and acidic residues" evidence="1">
    <location>
        <begin position="583"/>
        <end position="593"/>
    </location>
</feature>
<feature type="compositionally biased region" description="Polar residues" evidence="1">
    <location>
        <begin position="600"/>
        <end position="626"/>
    </location>
</feature>
<feature type="compositionally biased region" description="Polar residues" evidence="1">
    <location>
        <begin position="639"/>
        <end position="663"/>
    </location>
</feature>
<feature type="compositionally biased region" description="Polar residues" evidence="1">
    <location>
        <begin position="675"/>
        <end position="693"/>
    </location>
</feature>
<feature type="compositionally biased region" description="Basic residues" evidence="1">
    <location>
        <begin position="694"/>
        <end position="708"/>
    </location>
</feature>
<feature type="compositionally biased region" description="Polar residues" evidence="1">
    <location>
        <begin position="709"/>
        <end position="750"/>
    </location>
</feature>
<feature type="compositionally biased region" description="Basic residues" evidence="1">
    <location>
        <begin position="763"/>
        <end position="784"/>
    </location>
</feature>
<feature type="compositionally biased region" description="Polar residues" evidence="1">
    <location>
        <begin position="800"/>
        <end position="828"/>
    </location>
</feature>
<feature type="compositionally biased region" description="Polar residues" evidence="1">
    <location>
        <begin position="836"/>
        <end position="860"/>
    </location>
</feature>
<feature type="splice variant" id="VSP_056854" description="In isoform 2." evidence="3">
    <location>
        <begin position="1"/>
        <end position="176"/>
    </location>
</feature>
<feature type="splice variant" id="VSP_056855" description="In isoform 2." evidence="3">
    <original>DCFFQLGNLAFAEADYQQALALSPQDEGANTRMGLLQEKMGFCEQ</original>
    <variation>GAQRPGHWGGGVRGSLAISKAPTGHLRPLGGRRKGERKEAREEEM</variation>
    <location>
        <begin position="373"/>
        <end position="417"/>
    </location>
</feature>
<feature type="splice variant" id="VSP_056856" description="In isoform 2." evidence="3">
    <location>
        <begin position="418"/>
        <end position="873"/>
    </location>
</feature>
<feature type="sequence variant" id="VAR_025542" description="In dbSNP:rs17852941." evidence="2">
    <original>M</original>
    <variation>T</variation>
    <location>
        <position position="405"/>
    </location>
</feature>
<feature type="sequence variant" id="VAR_025543" description="In dbSNP:rs13298768." evidence="2">
    <original>E</original>
    <variation>G</variation>
    <location>
        <position position="588"/>
    </location>
</feature>
<feature type="sequence variant" id="VAR_052626" description="In dbSNP:rs4837178.">
    <original>Y</original>
    <variation>C</variation>
    <location>
        <position position="809"/>
    </location>
</feature>
<feature type="sequence variant" id="VAR_025544" description="In dbSNP:rs17852943." evidence="2">
    <original>A</original>
    <variation>S</variation>
    <location>
        <position position="872"/>
    </location>
</feature>
<accession>Q8NEE8</accession>
<accession>B4DYG4</accession>
<accession>B5ME24</accession>
<accession>Q5JU66</accession>
<accession>Q96M72</accession>
<dbReference type="EMBL" id="AK057342">
    <property type="protein sequence ID" value="BAB71437.1"/>
    <property type="molecule type" value="mRNA"/>
</dbReference>
<dbReference type="EMBL" id="AK302422">
    <property type="protein sequence ID" value="BAG63726.1"/>
    <property type="molecule type" value="mRNA"/>
</dbReference>
<dbReference type="EMBL" id="AL162426">
    <property type="status" value="NOT_ANNOTATED_CDS"/>
    <property type="molecule type" value="Genomic_DNA"/>
</dbReference>
<dbReference type="EMBL" id="BC031281">
    <property type="protein sequence ID" value="AAH31281.1"/>
    <property type="molecule type" value="mRNA"/>
</dbReference>
<dbReference type="CCDS" id="CCDS6875.1">
    <molecule id="Q8NEE8-1"/>
</dbReference>
<dbReference type="RefSeq" id="NP_001303966.1">
    <property type="nucleotide sequence ID" value="NM_001317037.1"/>
</dbReference>
<dbReference type="RefSeq" id="NP_659402.1">
    <molecule id="Q8NEE8-1"/>
    <property type="nucleotide sequence ID" value="NM_144965.3"/>
</dbReference>
<dbReference type="SMR" id="Q8NEE8"/>
<dbReference type="BioGRID" id="127660">
    <property type="interactions" value="6"/>
</dbReference>
<dbReference type="FunCoup" id="Q8NEE8">
    <property type="interactions" value="88"/>
</dbReference>
<dbReference type="IntAct" id="Q8NEE8">
    <property type="interactions" value="5"/>
</dbReference>
<dbReference type="MINT" id="Q8NEE8"/>
<dbReference type="STRING" id="9606.ENSP00000362386"/>
<dbReference type="iPTMnet" id="Q8NEE8"/>
<dbReference type="PhosphoSitePlus" id="Q8NEE8"/>
<dbReference type="BioMuta" id="TTC16"/>
<dbReference type="DMDM" id="90110783"/>
<dbReference type="jPOST" id="Q8NEE8"/>
<dbReference type="MassIVE" id="Q8NEE8"/>
<dbReference type="PaxDb" id="9606-ENSP00000362386"/>
<dbReference type="PeptideAtlas" id="Q8NEE8"/>
<dbReference type="ProteomicsDB" id="5521"/>
<dbReference type="ProteomicsDB" id="73156">
    <molecule id="Q8NEE8-1"/>
</dbReference>
<dbReference type="Antibodypedia" id="17085">
    <property type="antibodies" value="105 antibodies from 18 providers"/>
</dbReference>
<dbReference type="DNASU" id="158248"/>
<dbReference type="Ensembl" id="ENST00000373289.4">
    <molecule id="Q8NEE8-1"/>
    <property type="protein sequence ID" value="ENSP00000362386.3"/>
    <property type="gene ID" value="ENSG00000167094.16"/>
</dbReference>
<dbReference type="GeneID" id="158248"/>
<dbReference type="KEGG" id="hsa:158248"/>
<dbReference type="MANE-Select" id="ENST00000373289.4">
    <property type="protein sequence ID" value="ENSP00000362386.3"/>
    <property type="RefSeq nucleotide sequence ID" value="NM_144965.3"/>
    <property type="RefSeq protein sequence ID" value="NP_659402.1"/>
</dbReference>
<dbReference type="UCSC" id="uc004brq.2">
    <molecule id="Q8NEE8-1"/>
    <property type="organism name" value="human"/>
</dbReference>
<dbReference type="AGR" id="HGNC:26536"/>
<dbReference type="CTD" id="158248"/>
<dbReference type="DisGeNET" id="158248"/>
<dbReference type="GeneCards" id="TTC16"/>
<dbReference type="HGNC" id="HGNC:26536">
    <property type="gene designation" value="TTC16"/>
</dbReference>
<dbReference type="HPA" id="ENSG00000167094">
    <property type="expression patterns" value="Group enriched (fallopian tube, testis)"/>
</dbReference>
<dbReference type="neXtProt" id="NX_Q8NEE8"/>
<dbReference type="OpenTargets" id="ENSG00000167094"/>
<dbReference type="PharmGKB" id="PA134871808"/>
<dbReference type="VEuPathDB" id="HostDB:ENSG00000167094"/>
<dbReference type="eggNOG" id="KOG1124">
    <property type="taxonomic scope" value="Eukaryota"/>
</dbReference>
<dbReference type="GeneTree" id="ENSGT00390000004550"/>
<dbReference type="HOGENOM" id="CLU_017316_1_0_1"/>
<dbReference type="InParanoid" id="Q8NEE8"/>
<dbReference type="OMA" id="CQEYRST"/>
<dbReference type="OrthoDB" id="1926212at2759"/>
<dbReference type="PAN-GO" id="Q8NEE8">
    <property type="GO annotations" value="0 GO annotations based on evolutionary models"/>
</dbReference>
<dbReference type="PhylomeDB" id="Q8NEE8"/>
<dbReference type="TreeFam" id="TF350096"/>
<dbReference type="PathwayCommons" id="Q8NEE8"/>
<dbReference type="SignaLink" id="Q8NEE8"/>
<dbReference type="BioGRID-ORCS" id="158248">
    <property type="hits" value="10 hits in 1146 CRISPR screens"/>
</dbReference>
<dbReference type="ChiTaRS" id="TTC16">
    <property type="organism name" value="human"/>
</dbReference>
<dbReference type="GenomeRNAi" id="158248"/>
<dbReference type="Pharos" id="Q8NEE8">
    <property type="development level" value="Tdark"/>
</dbReference>
<dbReference type="PRO" id="PR:Q8NEE8"/>
<dbReference type="Proteomes" id="UP000005640">
    <property type="component" value="Chromosome 9"/>
</dbReference>
<dbReference type="RNAct" id="Q8NEE8">
    <property type="molecule type" value="protein"/>
</dbReference>
<dbReference type="Bgee" id="ENSG00000167094">
    <property type="expression patterns" value="Expressed in right uterine tube and 102 other cell types or tissues"/>
</dbReference>
<dbReference type="Gene3D" id="1.25.40.10">
    <property type="entry name" value="Tetratricopeptide repeat domain"/>
    <property type="match status" value="5"/>
</dbReference>
<dbReference type="InterPro" id="IPR011990">
    <property type="entry name" value="TPR-like_helical_dom_sf"/>
</dbReference>
<dbReference type="InterPro" id="IPR019734">
    <property type="entry name" value="TPR_rpt"/>
</dbReference>
<dbReference type="PANTHER" id="PTHR45153">
    <property type="entry name" value="TETRATRICOPEPTIDE REPEAT PROTEIN 16"/>
    <property type="match status" value="1"/>
</dbReference>
<dbReference type="PANTHER" id="PTHR45153:SF1">
    <property type="entry name" value="TETRATRICOPEPTIDE REPEAT PROTEIN 16"/>
    <property type="match status" value="1"/>
</dbReference>
<dbReference type="Pfam" id="PF00515">
    <property type="entry name" value="TPR_1"/>
    <property type="match status" value="1"/>
</dbReference>
<dbReference type="Pfam" id="PF13432">
    <property type="entry name" value="TPR_16"/>
    <property type="match status" value="1"/>
</dbReference>
<dbReference type="SMART" id="SM00028">
    <property type="entry name" value="TPR"/>
    <property type="match status" value="9"/>
</dbReference>
<dbReference type="SUPFAM" id="SSF48452">
    <property type="entry name" value="TPR-like"/>
    <property type="match status" value="2"/>
</dbReference>
<dbReference type="PROSITE" id="PS50005">
    <property type="entry name" value="TPR"/>
    <property type="match status" value="8"/>
</dbReference>
<dbReference type="PROSITE" id="PS50293">
    <property type="entry name" value="TPR_REGION"/>
    <property type="match status" value="1"/>
</dbReference>
<gene>
    <name type="primary">TTC16</name>
</gene>
<proteinExistence type="evidence at protein level"/>
<sequence>MTDSDEDALKVDQGPSRDIPKPWVIPAPKGILQHIFGTSHVFQSICDVKPKVTGLTVPLKVREYYSRGQQCLEQADWETAVLLFSRALHLDPQLVDFYALRAEAYLQLCDFSSAAQNLRRAYSLQQDNCKHLERLTFVLYLQGQCLFEQCAFLDALNVFSHAAELQPEKPCFRYRCMACLLALKQHQACLTLITNELKQDTTNADVYIFRARLYNFLQKPHLCYRDLHSALLLNPKHPQARMLLQKMVAQAQQARQDAGILAVQGKLQHALQRINRAIENNPLDPSLFLFRGTMYRRLQEFDGAVEDFLKVLDMVTEDQEDMVRQAQRQLLLTYNDFAVHCYRQGAYQEGVLLLNKALRDEQQEKGLYINRGDCFFQLGNLAFAEADYQQALALSPQDEGANTRMGLLQEKMGFCEQRRKQFQKAENHFSTAIRHNPQKAQYYLYRAKSRQLLQNIFGARQDVATVLLLNPKQPKLSLLMTNLFPGMSVEEVLSTQIAHLARLQLEQMVEGSLQAGSPQGIVGMLKRHELERQKALALQHSWKQGEPLIATSEELKATPEIPQVKPGSSEGEAEAPEEEEEKEKEKKEEKKSELIPSKVASLSDSYLDQTSSASSMSFRTTGTSETEMSAICQEYRSTSATAVTFSDSSLLKTQSSDSGNNREALSHGPRKIKATQGQRQSLSKTEPTQSQRRNSSKTKATIHKRNSSKTKATQSQRRNSSKTRATQGQGQSSSKTEATQGQRQSSSEIEATQGPRQEPSKTKTTRSPRQRPRKVKAARGRSWRPSKVDATQGRSRGLLRSSTKTEAFYDSNWSLSKTEYAQGQGQRSSKAEGAQGKSQGMSSTSSKAESTWGPSPSLSKTEVDQDLTYYEAV</sequence>
<keyword id="KW-0025">Alternative splicing</keyword>
<keyword id="KW-1267">Proteomics identification</keyword>
<keyword id="KW-1185">Reference proteome</keyword>
<keyword id="KW-0677">Repeat</keyword>
<keyword id="KW-0802">TPR repeat</keyword>
<evidence type="ECO:0000256" key="1">
    <source>
        <dbReference type="SAM" id="MobiDB-lite"/>
    </source>
</evidence>
<evidence type="ECO:0000269" key="2">
    <source>
    </source>
</evidence>
<evidence type="ECO:0000303" key="3">
    <source>
    </source>
</evidence>
<protein>
    <recommendedName>
        <fullName>Tetratricopeptide repeat protein 16</fullName>
        <shortName>TPR repeat protein 16</shortName>
    </recommendedName>
</protein>
<reference key="1">
    <citation type="journal article" date="2004" name="Nat. Genet.">
        <title>Complete sequencing and characterization of 21,243 full-length human cDNAs.</title>
        <authorList>
            <person name="Ota T."/>
            <person name="Suzuki Y."/>
            <person name="Nishikawa T."/>
            <person name="Otsuki T."/>
            <person name="Sugiyama T."/>
            <person name="Irie R."/>
            <person name="Wakamatsu A."/>
            <person name="Hayashi K."/>
            <person name="Sato H."/>
            <person name="Nagai K."/>
            <person name="Kimura K."/>
            <person name="Makita H."/>
            <person name="Sekine M."/>
            <person name="Obayashi M."/>
            <person name="Nishi T."/>
            <person name="Shibahara T."/>
            <person name="Tanaka T."/>
            <person name="Ishii S."/>
            <person name="Yamamoto J."/>
            <person name="Saito K."/>
            <person name="Kawai Y."/>
            <person name="Isono Y."/>
            <person name="Nakamura Y."/>
            <person name="Nagahari K."/>
            <person name="Murakami K."/>
            <person name="Yasuda T."/>
            <person name="Iwayanagi T."/>
            <person name="Wagatsuma M."/>
            <person name="Shiratori A."/>
            <person name="Sudo H."/>
            <person name="Hosoiri T."/>
            <person name="Kaku Y."/>
            <person name="Kodaira H."/>
            <person name="Kondo H."/>
            <person name="Sugawara M."/>
            <person name="Takahashi M."/>
            <person name="Kanda K."/>
            <person name="Yokoi T."/>
            <person name="Furuya T."/>
            <person name="Kikkawa E."/>
            <person name="Omura Y."/>
            <person name="Abe K."/>
            <person name="Kamihara K."/>
            <person name="Katsuta N."/>
            <person name="Sato K."/>
            <person name="Tanikawa M."/>
            <person name="Yamazaki M."/>
            <person name="Ninomiya K."/>
            <person name="Ishibashi T."/>
            <person name="Yamashita H."/>
            <person name="Murakawa K."/>
            <person name="Fujimori K."/>
            <person name="Tanai H."/>
            <person name="Kimata M."/>
            <person name="Watanabe M."/>
            <person name="Hiraoka S."/>
            <person name="Chiba Y."/>
            <person name="Ishida S."/>
            <person name="Ono Y."/>
            <person name="Takiguchi S."/>
            <person name="Watanabe S."/>
            <person name="Yosida M."/>
            <person name="Hotuta T."/>
            <person name="Kusano J."/>
            <person name="Kanehori K."/>
            <person name="Takahashi-Fujii A."/>
            <person name="Hara H."/>
            <person name="Tanase T.-O."/>
            <person name="Nomura Y."/>
            <person name="Togiya S."/>
            <person name="Komai F."/>
            <person name="Hara R."/>
            <person name="Takeuchi K."/>
            <person name="Arita M."/>
            <person name="Imose N."/>
            <person name="Musashino K."/>
            <person name="Yuuki H."/>
            <person name="Oshima A."/>
            <person name="Sasaki N."/>
            <person name="Aotsuka S."/>
            <person name="Yoshikawa Y."/>
            <person name="Matsunawa H."/>
            <person name="Ichihara T."/>
            <person name="Shiohata N."/>
            <person name="Sano S."/>
            <person name="Moriya S."/>
            <person name="Momiyama H."/>
            <person name="Satoh N."/>
            <person name="Takami S."/>
            <person name="Terashima Y."/>
            <person name="Suzuki O."/>
            <person name="Nakagawa S."/>
            <person name="Senoh A."/>
            <person name="Mizoguchi H."/>
            <person name="Goto Y."/>
            <person name="Shimizu F."/>
            <person name="Wakebe H."/>
            <person name="Hishigaki H."/>
            <person name="Watanabe T."/>
            <person name="Sugiyama A."/>
            <person name="Takemoto M."/>
            <person name="Kawakami B."/>
            <person name="Yamazaki M."/>
            <person name="Watanabe K."/>
            <person name="Kumagai A."/>
            <person name="Itakura S."/>
            <person name="Fukuzumi Y."/>
            <person name="Fujimori Y."/>
            <person name="Komiyama M."/>
            <person name="Tashiro H."/>
            <person name="Tanigami A."/>
            <person name="Fujiwara T."/>
            <person name="Ono T."/>
            <person name="Yamada K."/>
            <person name="Fujii Y."/>
            <person name="Ozaki K."/>
            <person name="Hirao M."/>
            <person name="Ohmori Y."/>
            <person name="Kawabata A."/>
            <person name="Hikiji T."/>
            <person name="Kobatake N."/>
            <person name="Inagaki H."/>
            <person name="Ikema Y."/>
            <person name="Okamoto S."/>
            <person name="Okitani R."/>
            <person name="Kawakami T."/>
            <person name="Noguchi S."/>
            <person name="Itoh T."/>
            <person name="Shigeta K."/>
            <person name="Senba T."/>
            <person name="Matsumura K."/>
            <person name="Nakajima Y."/>
            <person name="Mizuno T."/>
            <person name="Morinaga M."/>
            <person name="Sasaki M."/>
            <person name="Togashi T."/>
            <person name="Oyama M."/>
            <person name="Hata H."/>
            <person name="Watanabe M."/>
            <person name="Komatsu T."/>
            <person name="Mizushima-Sugano J."/>
            <person name="Satoh T."/>
            <person name="Shirai Y."/>
            <person name="Takahashi Y."/>
            <person name="Nakagawa K."/>
            <person name="Okumura K."/>
            <person name="Nagase T."/>
            <person name="Nomura N."/>
            <person name="Kikuchi H."/>
            <person name="Masuho Y."/>
            <person name="Yamashita R."/>
            <person name="Nakai K."/>
            <person name="Yada T."/>
            <person name="Nakamura Y."/>
            <person name="Ohara O."/>
            <person name="Isogai T."/>
            <person name="Sugano S."/>
        </authorList>
    </citation>
    <scope>NUCLEOTIDE SEQUENCE [LARGE SCALE MRNA] (ISOFORMS 1 AND 2)</scope>
    <source>
        <tissue>Testis</tissue>
    </source>
</reference>
<reference key="2">
    <citation type="journal article" date="2004" name="Nature">
        <title>DNA sequence and analysis of human chromosome 9.</title>
        <authorList>
            <person name="Humphray S.J."/>
            <person name="Oliver K."/>
            <person name="Hunt A.R."/>
            <person name="Plumb R.W."/>
            <person name="Loveland J.E."/>
            <person name="Howe K.L."/>
            <person name="Andrews T.D."/>
            <person name="Searle S."/>
            <person name="Hunt S.E."/>
            <person name="Scott C.E."/>
            <person name="Jones M.C."/>
            <person name="Ainscough R."/>
            <person name="Almeida J.P."/>
            <person name="Ambrose K.D."/>
            <person name="Ashwell R.I.S."/>
            <person name="Babbage A.K."/>
            <person name="Babbage S."/>
            <person name="Bagguley C.L."/>
            <person name="Bailey J."/>
            <person name="Banerjee R."/>
            <person name="Barker D.J."/>
            <person name="Barlow K.F."/>
            <person name="Bates K."/>
            <person name="Beasley H."/>
            <person name="Beasley O."/>
            <person name="Bird C.P."/>
            <person name="Bray-Allen S."/>
            <person name="Brown A.J."/>
            <person name="Brown J.Y."/>
            <person name="Burford D."/>
            <person name="Burrill W."/>
            <person name="Burton J."/>
            <person name="Carder C."/>
            <person name="Carter N.P."/>
            <person name="Chapman J.C."/>
            <person name="Chen Y."/>
            <person name="Clarke G."/>
            <person name="Clark S.Y."/>
            <person name="Clee C.M."/>
            <person name="Clegg S."/>
            <person name="Collier R.E."/>
            <person name="Corby N."/>
            <person name="Crosier M."/>
            <person name="Cummings A.T."/>
            <person name="Davies J."/>
            <person name="Dhami P."/>
            <person name="Dunn M."/>
            <person name="Dutta I."/>
            <person name="Dyer L.W."/>
            <person name="Earthrowl M.E."/>
            <person name="Faulkner L."/>
            <person name="Fleming C.J."/>
            <person name="Frankish A."/>
            <person name="Frankland J.A."/>
            <person name="French L."/>
            <person name="Fricker D.G."/>
            <person name="Garner P."/>
            <person name="Garnett J."/>
            <person name="Ghori J."/>
            <person name="Gilbert J.G.R."/>
            <person name="Glison C."/>
            <person name="Grafham D.V."/>
            <person name="Gribble S."/>
            <person name="Griffiths C."/>
            <person name="Griffiths-Jones S."/>
            <person name="Grocock R."/>
            <person name="Guy J."/>
            <person name="Hall R.E."/>
            <person name="Hammond S."/>
            <person name="Harley J.L."/>
            <person name="Harrison E.S.I."/>
            <person name="Hart E.A."/>
            <person name="Heath P.D."/>
            <person name="Henderson C.D."/>
            <person name="Hopkins B.L."/>
            <person name="Howard P.J."/>
            <person name="Howden P.J."/>
            <person name="Huckle E."/>
            <person name="Johnson C."/>
            <person name="Johnson D."/>
            <person name="Joy A.A."/>
            <person name="Kay M."/>
            <person name="Keenan S."/>
            <person name="Kershaw J.K."/>
            <person name="Kimberley A.M."/>
            <person name="King A."/>
            <person name="Knights A."/>
            <person name="Laird G.K."/>
            <person name="Langford C."/>
            <person name="Lawlor S."/>
            <person name="Leongamornlert D.A."/>
            <person name="Leversha M."/>
            <person name="Lloyd C."/>
            <person name="Lloyd D.M."/>
            <person name="Lovell J."/>
            <person name="Martin S."/>
            <person name="Mashreghi-Mohammadi M."/>
            <person name="Matthews L."/>
            <person name="McLaren S."/>
            <person name="McLay K.E."/>
            <person name="McMurray A."/>
            <person name="Milne S."/>
            <person name="Nickerson T."/>
            <person name="Nisbett J."/>
            <person name="Nordsiek G."/>
            <person name="Pearce A.V."/>
            <person name="Peck A.I."/>
            <person name="Porter K.M."/>
            <person name="Pandian R."/>
            <person name="Pelan S."/>
            <person name="Phillimore B."/>
            <person name="Povey S."/>
            <person name="Ramsey Y."/>
            <person name="Rand V."/>
            <person name="Scharfe M."/>
            <person name="Sehra H.K."/>
            <person name="Shownkeen R."/>
            <person name="Sims S.K."/>
            <person name="Skuce C.D."/>
            <person name="Smith M."/>
            <person name="Steward C.A."/>
            <person name="Swarbreck D."/>
            <person name="Sycamore N."/>
            <person name="Tester J."/>
            <person name="Thorpe A."/>
            <person name="Tracey A."/>
            <person name="Tromans A."/>
            <person name="Thomas D.W."/>
            <person name="Wall M."/>
            <person name="Wallis J.M."/>
            <person name="West A.P."/>
            <person name="Whitehead S.L."/>
            <person name="Willey D.L."/>
            <person name="Williams S.A."/>
            <person name="Wilming L."/>
            <person name="Wray P.W."/>
            <person name="Young L."/>
            <person name="Ashurst J.L."/>
            <person name="Coulson A."/>
            <person name="Blocker H."/>
            <person name="Durbin R.M."/>
            <person name="Sulston J.E."/>
            <person name="Hubbard T."/>
            <person name="Jackson M.J."/>
            <person name="Bentley D.R."/>
            <person name="Beck S."/>
            <person name="Rogers J."/>
            <person name="Dunham I."/>
        </authorList>
    </citation>
    <scope>NUCLEOTIDE SEQUENCE [LARGE SCALE GENOMIC DNA]</scope>
</reference>
<reference key="3">
    <citation type="journal article" date="2004" name="Genome Res.">
        <title>The status, quality, and expansion of the NIH full-length cDNA project: the Mammalian Gene Collection (MGC).</title>
        <authorList>
            <consortium name="The MGC Project Team"/>
        </authorList>
    </citation>
    <scope>NUCLEOTIDE SEQUENCE [LARGE SCALE MRNA] (ISOFORM 1)</scope>
    <scope>VARIANTS THR-405; GLY-588 AND SER-872</scope>
    <source>
        <tissue>Testis</tissue>
    </source>
</reference>
<name>TTC16_HUMAN</name>
<organism>
    <name type="scientific">Homo sapiens</name>
    <name type="common">Human</name>
    <dbReference type="NCBI Taxonomy" id="9606"/>
    <lineage>
        <taxon>Eukaryota</taxon>
        <taxon>Metazoa</taxon>
        <taxon>Chordata</taxon>
        <taxon>Craniata</taxon>
        <taxon>Vertebrata</taxon>
        <taxon>Euteleostomi</taxon>
        <taxon>Mammalia</taxon>
        <taxon>Eutheria</taxon>
        <taxon>Euarchontoglires</taxon>
        <taxon>Primates</taxon>
        <taxon>Haplorrhini</taxon>
        <taxon>Catarrhini</taxon>
        <taxon>Hominidae</taxon>
        <taxon>Homo</taxon>
    </lineage>
</organism>